<reference key="1">
    <citation type="journal article" date="1996" name="J. Neurosci.">
        <title>A novel neuronal P2x ATP receptor ion channel with widespread distribution in the brain.</title>
        <authorList>
            <person name="Seguela P."/>
            <person name="Haghighi A."/>
            <person name="Soghomonian J.J."/>
            <person name="Cooper E."/>
        </authorList>
    </citation>
    <scope>NUCLEOTIDE SEQUENCE [MRNA]</scope>
    <source>
        <strain>Sprague-Dawley</strain>
        <tissue>Forebrain</tissue>
    </source>
</reference>
<reference key="2">
    <citation type="journal article" date="1995" name="FEBS Lett.">
        <title>A P2X purinoceptor cDNA conferring a novel pharmacological profile.</title>
        <authorList>
            <person name="Bo X."/>
            <person name="Zhang Y."/>
            <person name="Nassar M."/>
            <person name="Burnstock G."/>
            <person name="Schoepfer R."/>
        </authorList>
    </citation>
    <scope>NUCLEOTIDE SEQUENCE [MRNA]</scope>
</reference>
<reference key="3">
    <citation type="journal article" date="1996" name="Biochem. Biophys. Res. Commun.">
        <title>Cloning and pharmacological characterization of a fourth P2X receptor subtype widely expressed in brain and peripheral tissues including various endocrine tissues.</title>
        <authorList>
            <person name="Wang C.-Z."/>
            <person name="Namba N."/>
            <person name="Gonoi T."/>
            <person name="Inagaki N."/>
            <person name="Seino S."/>
        </authorList>
    </citation>
    <scope>NUCLEOTIDE SEQUENCE [MRNA]</scope>
    <source>
        <tissue>Pancreatic islet</tissue>
    </source>
</reference>
<reference key="4">
    <citation type="journal article" date="1996" name="EMBO J.">
        <title>An antagonist-insensitive P2X receptor expressed in epithelia and brain.</title>
        <authorList>
            <person name="Buell G.N."/>
            <person name="Lewis C."/>
            <person name="Collo G."/>
            <person name="North R.A."/>
            <person name="Surprenant A."/>
        </authorList>
    </citation>
    <scope>NUCLEOTIDE SEQUENCE [MRNA]</scope>
    <scope>MUTAGENESIS OF GLU-249</scope>
    <scope>FUNCTION</scope>
    <scope>TISSUE SPECIFICITY</scope>
    <source>
        <tissue>Superior cervical ganglion</tissue>
    </source>
</reference>
<reference key="5">
    <citation type="journal article" date="1996" name="Proc. Natl. Acad. Sci. U.S.A.">
        <title>P2X4: an ATP-activated ionotropic receptor cloned from rat brain.</title>
        <authorList>
            <person name="Soto F."/>
            <person name="Garcia-Guzman M."/>
            <person name="Gomez-Hernandez J.M."/>
            <person name="Hollmann M."/>
            <person name="Karschin C."/>
            <person name="Stuemer W."/>
        </authorList>
    </citation>
    <scope>NUCLEOTIDE SEQUENCE [MRNA]</scope>
    <scope>FUNCTION</scope>
    <scope>TRANSPORTER ACTIVITY</scope>
    <source>
        <strain>Sprague-Dawley</strain>
        <tissue>Brain</tissue>
    </source>
</reference>
<reference key="6">
    <citation type="journal article" date="2004" name="Genome Res.">
        <title>The status, quality, and expansion of the NIH full-length cDNA project: the Mammalian Gene Collection (MGC).</title>
        <authorList>
            <consortium name="The MGC Project Team"/>
        </authorList>
    </citation>
    <scope>NUCLEOTIDE SEQUENCE [LARGE SCALE MRNA]</scope>
    <source>
        <tissue>Lung</tissue>
    </source>
</reference>
<reference key="7">
    <citation type="journal article" date="2002" name="J. Neurosci.">
        <title>P2X receptor trafficking in neurons is subunit specific.</title>
        <authorList>
            <person name="Bobanovic L.K."/>
            <person name="Royle S.J."/>
            <person name="Murrell-Lagnado R.D."/>
        </authorList>
    </citation>
    <scope>SUBUNIT</scope>
    <scope>INTERACTION WITH P2RX6</scope>
</reference>
<reference key="8">
    <citation type="journal article" date="2003" name="Nature">
        <title>P2X4 receptors induced in spinal microglia gate tactile allodynia after nerve injury.</title>
        <authorList>
            <person name="Tsuda M."/>
            <person name="Shigemoto-Mogami Y."/>
            <person name="Koizumi S."/>
            <person name="Mizokoshi A."/>
            <person name="Kohsaka S."/>
            <person name="Salter M.W."/>
            <person name="Inoue K."/>
        </authorList>
    </citation>
    <scope>FUNCTION</scope>
    <scope>TISSUE SPECIFICITY</scope>
    <scope>INDUCTION BY NERVE INJURY</scope>
</reference>
<reference key="9">
    <citation type="journal article" date="2005" name="J. Cell Sci.">
        <title>Non-canonical YXXGPhi endocytic motifs: recognition by AP2 and preferential utilization in P2X4 receptors.</title>
        <authorList>
            <person name="Royle S.J."/>
            <person name="Qureshi O.S."/>
            <person name="Bobanovic L.K."/>
            <person name="Evans P.R."/>
            <person name="Owen D.J."/>
            <person name="Murrell-Lagnado R.D."/>
        </authorList>
    </citation>
    <scope>FUNCTION</scope>
    <scope>INTERACTION WITH AP1M2</scope>
    <scope>SUBCELLULAR LOCATION</scope>
    <scope>MUTAGENESIS OF TYR-372</scope>
</reference>
<reference key="10">
    <citation type="journal article" date="2005" name="J. Neurochem.">
        <title>Biochemical and functional evidence for heteromeric assembly of P2X1 and P2X4 subunits.</title>
        <authorList>
            <person name="Nicke A."/>
            <person name="Kerschensteiner D."/>
            <person name="Soto F."/>
        </authorList>
    </citation>
    <scope>FUNCTION</scope>
    <scope>SUBUNIT</scope>
</reference>
<reference key="11">
    <citation type="journal article" date="2014" name="Biochemistry">
        <title>Involvement of ectodomain Leu 214 in ATP binding and channel desensitization of the P2X4 receptor.</title>
        <authorList>
            <person name="Zhang L."/>
            <person name="Xu H."/>
            <person name="Jie Y."/>
            <person name="Gao C."/>
            <person name="Chen W."/>
            <person name="Yin S."/>
            <person name="Samways D.S."/>
            <person name="Li Z."/>
        </authorList>
    </citation>
    <scope>FUNCTION</scope>
    <scope>MUTAGENESIS OF LEU-214</scope>
</reference>
<reference key="12">
    <citation type="journal article" date="2014" name="J. Biol. Chem.">
        <title>P2X4 forms functional ATP-activated cation channels on lysosomal membranes regulated by luminal pH.</title>
        <authorList>
            <person name="Huang P."/>
            <person name="Zou Y."/>
            <person name="Zhong X.Z."/>
            <person name="Cao Q."/>
            <person name="Zhao K."/>
            <person name="Zhu M.X."/>
            <person name="Murrell-Lagnado R."/>
            <person name="Dong X.P."/>
        </authorList>
    </citation>
    <scope>FUNCTION</scope>
    <scope>ACTIVITY REGULATION</scope>
    <scope>SUBCELLULAR LOCATION</scope>
    <scope>MUTAGENESIS OF LYS-67 AND SER-341</scope>
</reference>
<reference evidence="17" key="13">
    <citation type="journal article" date="2015" name="FEBS Lett.">
        <title>Solution structure of the rat P2X4 receptor head domain involved in inhibitory metal binding.</title>
        <authorList>
            <person name="Igawa T."/>
            <person name="Abe Y."/>
            <person name="Tsuda M."/>
            <person name="Inoue K."/>
            <person name="Ueda T."/>
        </authorList>
    </citation>
    <scope>STRUCTURE BY NMR OF 111-167</scope>
    <scope>DISULFIDE BONDS</scope>
</reference>
<reference key="14">
    <citation type="journal article" date="2017" name="Sci. Rep.">
        <title>Structural insights into the nucleotide base specificity of P2X receptors.</title>
        <authorList>
            <person name="Kasuya G."/>
            <person name="Fujiwara Y."/>
            <person name="Tsukamoto H."/>
            <person name="Morinaga S."/>
            <person name="Ryu S."/>
            <person name="Touhara K."/>
            <person name="Ishitani R."/>
            <person name="Furutani Y."/>
            <person name="Hattori M."/>
            <person name="Nureki O."/>
        </authorList>
    </citation>
    <scope>FUNCTION</scope>
    <scope>MUTAGENESIS OF HIS-140 AND THR-186</scope>
</reference>
<gene>
    <name type="primary">P2rx4</name>
</gene>
<evidence type="ECO:0000250" key="1"/>
<evidence type="ECO:0000250" key="2">
    <source>
        <dbReference type="UniProtKB" id="F8W463"/>
    </source>
</evidence>
<evidence type="ECO:0000250" key="3">
    <source>
        <dbReference type="UniProtKB" id="Q99571"/>
    </source>
</evidence>
<evidence type="ECO:0000250" key="4">
    <source>
        <dbReference type="UniProtKB" id="Q9JJX6"/>
    </source>
</evidence>
<evidence type="ECO:0000255" key="5"/>
<evidence type="ECO:0000269" key="6">
    <source>
    </source>
</evidence>
<evidence type="ECO:0000269" key="7">
    <source>
    </source>
</evidence>
<evidence type="ECO:0000269" key="8">
    <source>
    </source>
</evidence>
<evidence type="ECO:0000269" key="9">
    <source>
    </source>
</evidence>
<evidence type="ECO:0000269" key="10">
    <source>
    </source>
</evidence>
<evidence type="ECO:0000269" key="11">
    <source>
    </source>
</evidence>
<evidence type="ECO:0000269" key="12">
    <source>
    </source>
</evidence>
<evidence type="ECO:0000269" key="13">
    <source>
    </source>
</evidence>
<evidence type="ECO:0000269" key="14">
    <source>
    </source>
</evidence>
<evidence type="ECO:0000269" key="15">
    <source>
    </source>
</evidence>
<evidence type="ECO:0000305" key="16"/>
<evidence type="ECO:0007744" key="17">
    <source>
        <dbReference type="PDB" id="2RUP"/>
    </source>
</evidence>
<evidence type="ECO:0007829" key="18">
    <source>
        <dbReference type="PDB" id="2BP5"/>
    </source>
</evidence>
<evidence type="ECO:0007829" key="19">
    <source>
        <dbReference type="PDB" id="2RUP"/>
    </source>
</evidence>
<sequence length="388" mass="43501">MAGCCSVLGSFLFEYDTPRIVLIRSRKVGLMNRAVQLLILAYVIGWVFVWEKGYQETDSVVSSVTTKAKGVAVTNTSQLGFRIWDVADYVIPAQEENSLFIMTNMIVTVNQTQSTCPEIPDKTSICNSDADCTPGSVDTHSSGVATGRCVPFNESVKTCEVAAWCPVENDVGVPTPAFLKAAENFTLLVKNNIWYPKFNFSKRNILPNITTSYLKSCIYNAQTDPFCPIFRLGTIVEDAGHSFQEMAVEGGIMGIQIKWDCNLDRAASLCLPRYSFRRLDTRDLEHNVSPGYNFRFAKYYRDLAGKEQRTLTKAYGIRFDIIVFGKAGKFDIIPTMINVGSGLALLGVATVLCDVIVLYCMKKKYYYRDKKYKYVEDYEQGLSGEMNQ</sequence>
<organism>
    <name type="scientific">Rattus norvegicus</name>
    <name type="common">Rat</name>
    <dbReference type="NCBI Taxonomy" id="10116"/>
    <lineage>
        <taxon>Eukaryota</taxon>
        <taxon>Metazoa</taxon>
        <taxon>Chordata</taxon>
        <taxon>Craniata</taxon>
        <taxon>Vertebrata</taxon>
        <taxon>Euteleostomi</taxon>
        <taxon>Mammalia</taxon>
        <taxon>Eutheria</taxon>
        <taxon>Euarchontoglires</taxon>
        <taxon>Glires</taxon>
        <taxon>Rodentia</taxon>
        <taxon>Myomorpha</taxon>
        <taxon>Muroidea</taxon>
        <taxon>Muridae</taxon>
        <taxon>Murinae</taxon>
        <taxon>Rattus</taxon>
    </lineage>
</organism>
<comment type="function">
    <text evidence="3 4 7 9 10 11 13 14 15">ATP-gated nonselective transmembrane cation channel permeable to potassium, sodium and calcium. CTP, but not GTP or UTP, functions as a weak affinity agonist for P2RX4 (PubMed:28332633, PubMed:8622997). Activated by extracellularly released ATP, it plays multiple role in immunity and central nervous system physiology (PubMed:15985462, PubMed:24762105). Plays a key role in initial steps of T-cell activation and Ca(2+) microdomain formation (By similarity). Also participates in basal T-cell activity without TCR/CD3 stimulation (By similarity). Promotes the differentiation and activation of Th17 cells via expression of retinoic acid-related orphan receptor C/RORC (By similarity). Upon activation, drives microglia motility via the PI3K/Akt pathway (PubMed:12917686). Could also function as an ATP-gated cation channel of lysosomal membranes (PubMed:24817123).</text>
</comment>
<comment type="catalytic activity">
    <reaction evidence="3">
        <text>K(+)(in) = K(+)(out)</text>
        <dbReference type="Rhea" id="RHEA:29463"/>
        <dbReference type="ChEBI" id="CHEBI:29103"/>
    </reaction>
</comment>
<comment type="catalytic activity">
    <reaction evidence="3">
        <text>Na(+)(in) = Na(+)(out)</text>
        <dbReference type="Rhea" id="RHEA:34963"/>
        <dbReference type="ChEBI" id="CHEBI:29101"/>
    </reaction>
</comment>
<comment type="catalytic activity">
    <reaction evidence="15">
        <text>Ca(2+)(in) = Ca(2+)(out)</text>
        <dbReference type="Rhea" id="RHEA:29671"/>
        <dbReference type="ChEBI" id="CHEBI:29108"/>
    </reaction>
</comment>
<comment type="activity regulation">
    <text evidence="3 11 13 15">Activated by ATP (PubMed:28332633, PubMed:8622997). pH-dependent and inhibited by acidic pH (PubMed:24817123).</text>
</comment>
<comment type="subunit">
    <text evidence="1 6 8">Functional P2RXs are organized as homomeric and heteromeric trimers. Forms heterotrimer with P2RX1 (PubMed:15686495). Interacts with P2RX7 (via C-terminus); this interaction is functional only in the presence of ATP (By similarity). Forms heterotrimer with P2RX4; functional differences between homomeric P2RX4 and P2RX4/6 heterotrimer are minor (PubMed:12077178). Interacts with AP1M2 (PubMed:15985462).</text>
</comment>
<comment type="interaction">
    <interactant intactId="EBI-9511617">
        <id>P51577</id>
    </interactant>
    <interactant intactId="EBI-9511543">
        <id>P49653</id>
        <label>P2rx2</label>
    </interactant>
    <organismsDiffer>false</organismsDiffer>
    <experiments>4</experiments>
</comment>
<comment type="interaction">
    <interactant intactId="EBI-9511617">
        <id>P51577</id>
    </interactant>
    <interactant intactId="EBI-9511617">
        <id>P51577</id>
        <label>P2rx4</label>
    </interactant>
    <organismsDiffer>false</organismsDiffer>
    <experiments>2</experiments>
</comment>
<comment type="subcellular location">
    <subcellularLocation>
        <location evidence="9">Cell membrane</location>
        <topology evidence="2">Multi-pass membrane protein</topology>
    </subcellularLocation>
    <subcellularLocation>
        <location evidence="11">Lysosome membrane</location>
        <topology evidence="5">Multi-pass membrane protein</topology>
    </subcellularLocation>
</comment>
<comment type="tissue specificity">
    <text evidence="7 14">Widespread distribution in the brain. Strongly expressed in microglial cells (PubMed:12917686). Also expressed in epithelial cells (PubMed:8598206).</text>
</comment>
<comment type="induction">
    <text evidence="7">By nerve injury.</text>
</comment>
<comment type="similarity">
    <text evidence="16">Belongs to the P2X receptor family.</text>
</comment>
<keyword id="KW-0002">3D-structure</keyword>
<keyword id="KW-0067">ATP-binding</keyword>
<keyword id="KW-1003">Cell membrane</keyword>
<keyword id="KW-1015">Disulfide bond</keyword>
<keyword id="KW-0325">Glycoprotein</keyword>
<keyword id="KW-0407">Ion channel</keyword>
<keyword id="KW-0406">Ion transport</keyword>
<keyword id="KW-1071">Ligand-gated ion channel</keyword>
<keyword id="KW-0458">Lysosome</keyword>
<keyword id="KW-0472">Membrane</keyword>
<keyword id="KW-0547">Nucleotide-binding</keyword>
<keyword id="KW-0675">Receptor</keyword>
<keyword id="KW-1185">Reference proteome</keyword>
<keyword id="KW-0812">Transmembrane</keyword>
<keyword id="KW-1133">Transmembrane helix</keyword>
<keyword id="KW-0813">Transport</keyword>
<name>P2RX4_RAT</name>
<feature type="chain" id="PRO_0000161554" description="P2X purinoceptor 4">
    <location>
        <begin position="1"/>
        <end position="388"/>
    </location>
</feature>
<feature type="topological domain" description="Cytoplasmic" evidence="2">
    <location>
        <begin position="1"/>
        <end position="33"/>
    </location>
</feature>
<feature type="transmembrane region" description="Helical; Name=1" evidence="2">
    <location>
        <begin position="34"/>
        <end position="54"/>
    </location>
</feature>
<feature type="topological domain" description="Extracellular" evidence="2">
    <location>
        <begin position="55"/>
        <end position="338"/>
    </location>
</feature>
<feature type="transmembrane region" description="Helical; Name=2" evidence="2">
    <location>
        <begin position="339"/>
        <end position="359"/>
    </location>
</feature>
<feature type="topological domain" description="Cytoplasmic" evidence="2">
    <location>
        <begin position="360"/>
        <end position="388"/>
    </location>
</feature>
<feature type="binding site" evidence="2">
    <location>
        <position position="67"/>
    </location>
    <ligand>
        <name>ATP</name>
        <dbReference type="ChEBI" id="CHEBI:30616"/>
    </ligand>
</feature>
<feature type="binding site" evidence="2">
    <location>
        <position position="67"/>
    </location>
    <ligand>
        <name>CTP</name>
        <dbReference type="ChEBI" id="CHEBI:37563"/>
    </ligand>
</feature>
<feature type="binding site" evidence="2">
    <location>
        <position position="69"/>
    </location>
    <ligand>
        <name>ATP</name>
        <dbReference type="ChEBI" id="CHEBI:30616"/>
    </ligand>
</feature>
<feature type="binding site" evidence="2">
    <location>
        <position position="69"/>
    </location>
    <ligand>
        <name>CTP</name>
        <dbReference type="ChEBI" id="CHEBI:37563"/>
    </ligand>
</feature>
<feature type="binding site" evidence="2">
    <location>
        <position position="186"/>
    </location>
    <ligand>
        <name>ATP</name>
        <dbReference type="ChEBI" id="CHEBI:30616"/>
    </ligand>
</feature>
<feature type="binding site" evidence="2">
    <location>
        <position position="186"/>
    </location>
    <ligand>
        <name>CTP</name>
        <dbReference type="ChEBI" id="CHEBI:37563"/>
    </ligand>
</feature>
<feature type="binding site" evidence="2">
    <location>
        <position position="188"/>
    </location>
    <ligand>
        <name>ATP</name>
        <dbReference type="ChEBI" id="CHEBI:30616"/>
    </ligand>
</feature>
<feature type="binding site" evidence="2">
    <location>
        <position position="293"/>
    </location>
    <ligand>
        <name>ATP</name>
        <dbReference type="ChEBI" id="CHEBI:30616"/>
    </ligand>
</feature>
<feature type="binding site" evidence="2">
    <location>
        <position position="293"/>
    </location>
    <ligand>
        <name>CTP</name>
        <dbReference type="ChEBI" id="CHEBI:37563"/>
    </ligand>
</feature>
<feature type="binding site" evidence="2">
    <location>
        <position position="295"/>
    </location>
    <ligand>
        <name>ATP</name>
        <dbReference type="ChEBI" id="CHEBI:30616"/>
    </ligand>
</feature>
<feature type="binding site" evidence="2">
    <location>
        <position position="295"/>
    </location>
    <ligand>
        <name>CTP</name>
        <dbReference type="ChEBI" id="CHEBI:37563"/>
    </ligand>
</feature>
<feature type="binding site" evidence="2">
    <location>
        <position position="313"/>
    </location>
    <ligand>
        <name>ATP</name>
        <dbReference type="ChEBI" id="CHEBI:30616"/>
    </ligand>
</feature>
<feature type="binding site" evidence="2">
    <location>
        <position position="313"/>
    </location>
    <ligand>
        <name>CTP</name>
        <dbReference type="ChEBI" id="CHEBI:37563"/>
    </ligand>
</feature>
<feature type="glycosylation site" description="N-linked (GlcNAc...) asparagine" evidence="5">
    <location>
        <position position="75"/>
    </location>
</feature>
<feature type="glycosylation site" description="N-linked (GlcNAc...) asparagine" evidence="5">
    <location>
        <position position="110"/>
    </location>
</feature>
<feature type="glycosylation site" description="N-linked (GlcNAc...) asparagine" evidence="5">
    <location>
        <position position="153"/>
    </location>
</feature>
<feature type="glycosylation site" description="N-linked (GlcNAc...) asparagine" evidence="5">
    <location>
        <position position="184"/>
    </location>
</feature>
<feature type="glycosylation site" description="N-linked (GlcNAc...) asparagine" evidence="5">
    <location>
        <position position="199"/>
    </location>
</feature>
<feature type="glycosylation site" description="N-linked (GlcNAc...) asparagine" evidence="5">
    <location>
        <position position="208"/>
    </location>
</feature>
<feature type="disulfide bond" evidence="12 17">
    <location>
        <begin position="116"/>
        <end position="165"/>
    </location>
</feature>
<feature type="disulfide bond" evidence="12 17">
    <location>
        <begin position="126"/>
        <end position="149"/>
    </location>
</feature>
<feature type="disulfide bond" evidence="12 17">
    <location>
        <begin position="132"/>
        <end position="159"/>
    </location>
</feature>
<feature type="disulfide bond" evidence="2">
    <location>
        <begin position="217"/>
        <end position="227"/>
    </location>
</feature>
<feature type="disulfide bond" evidence="2">
    <location>
        <begin position="261"/>
        <end position="270"/>
    </location>
</feature>
<feature type="mutagenesis site" description="Decreased cation transport." evidence="11">
    <original>K</original>
    <variation>A</variation>
    <location>
        <position position="67"/>
    </location>
</feature>
<feature type="mutagenesis site" description="Exhibits about 2.5-fold reduced ATP affinity and 14-fold reduced CTP affinity." evidence="13">
    <original>H</original>
    <variation>A</variation>
    <location>
        <position position="140"/>
    </location>
</feature>
<feature type="mutagenesis site" description="Exhibits about 2-fold reduced both ATP affinity and CTP affinity." evidence="13">
    <original>H</original>
    <variation>R</variation>
    <location>
        <position position="140"/>
    </location>
</feature>
<feature type="mutagenesis site" description="Abolishes ATP- and CTP-evoked current." evidence="13">
    <original>T</original>
    <variation>A</variation>
    <variation>V</variation>
    <location>
        <position position="186"/>
    </location>
</feature>
<feature type="mutagenesis site" description="Does not affect ATP- and CTP-evoked current. Reduced ATP affinity. Does not affect CTP affinity." evidence="13">
    <original>T</original>
    <variation>S</variation>
    <location>
        <position position="186"/>
    </location>
</feature>
<feature type="mutagenesis site" description="Markedly reduced sensitivity to ATP." evidence="10">
    <original>L</original>
    <variation>A</variation>
    <location>
        <position position="214"/>
    </location>
</feature>
<feature type="mutagenesis site" description="Restores antagonism by PPADS." evidence="14">
    <original>E</original>
    <variation>K</variation>
    <location>
        <position position="249"/>
    </location>
</feature>
<feature type="mutagenesis site" description="Decreased cation transport." evidence="11">
    <original>S</original>
    <variation>W</variation>
    <location>
        <position position="341"/>
    </location>
</feature>
<feature type="mutagenesis site" description="Complete loss of receptor functionality." evidence="9">
    <original>Y</original>
    <variation>A</variation>
    <location>
        <position position="372"/>
    </location>
</feature>
<feature type="sequence conflict" description="In Ref. 1; AAC52380." evidence="16" ref="1">
    <original>SV</original>
    <variation>LR</variation>
    <location>
        <begin position="136"/>
        <end position="137"/>
    </location>
</feature>
<feature type="sequence conflict" description="In Ref. 4; CAA61037." evidence="16" ref="4">
    <original>E</original>
    <variation>G</variation>
    <location>
        <position position="237"/>
    </location>
</feature>
<feature type="sequence conflict" description="In Ref. 2; CAA62607." evidence="16" ref="2">
    <original>G</original>
    <variation>A</variation>
    <location>
        <position position="305"/>
    </location>
</feature>
<feature type="strand" evidence="19">
    <location>
        <begin position="114"/>
        <end position="117"/>
    </location>
</feature>
<feature type="turn" evidence="19">
    <location>
        <begin position="129"/>
        <end position="131"/>
    </location>
</feature>
<feature type="turn" evidence="19">
    <location>
        <begin position="139"/>
        <end position="141"/>
    </location>
</feature>
<feature type="strand" evidence="19">
    <location>
        <begin position="143"/>
        <end position="150"/>
    </location>
</feature>
<feature type="strand" evidence="19">
    <location>
        <begin position="153"/>
        <end position="155"/>
    </location>
</feature>
<feature type="strand" evidence="19">
    <location>
        <begin position="158"/>
        <end position="163"/>
    </location>
</feature>
<feature type="strand" evidence="18">
    <location>
        <begin position="379"/>
        <end position="381"/>
    </location>
</feature>
<proteinExistence type="evidence at protein level"/>
<accession>P51577</accession>
<protein>
    <recommendedName>
        <fullName>P2X purinoceptor 4</fullName>
        <shortName>P2X4</shortName>
    </recommendedName>
    <alternativeName>
        <fullName>ATP receptor</fullName>
    </alternativeName>
    <alternativeName>
        <fullName>Purinergic receptor</fullName>
    </alternativeName>
</protein>
<dbReference type="EMBL" id="U32497">
    <property type="protein sequence ID" value="AAC52380.1"/>
    <property type="molecule type" value="mRNA"/>
</dbReference>
<dbReference type="EMBL" id="X91200">
    <property type="protein sequence ID" value="CAA62607.1"/>
    <property type="molecule type" value="mRNA"/>
</dbReference>
<dbReference type="EMBL" id="U47031">
    <property type="protein sequence ID" value="AAA99777.1"/>
    <property type="molecule type" value="mRNA"/>
</dbReference>
<dbReference type="EMBL" id="X87763">
    <property type="protein sequence ID" value="CAA61037.1"/>
    <property type="molecule type" value="mRNA"/>
</dbReference>
<dbReference type="EMBL" id="X93565">
    <property type="protein sequence ID" value="CAA63778.1"/>
    <property type="molecule type" value="mRNA"/>
</dbReference>
<dbReference type="EMBL" id="BC078792">
    <property type="protein sequence ID" value="AAH78792.1"/>
    <property type="molecule type" value="mRNA"/>
</dbReference>
<dbReference type="PIR" id="JC6137">
    <property type="entry name" value="JC6137"/>
</dbReference>
<dbReference type="RefSeq" id="NP_113782.2">
    <property type="nucleotide sequence ID" value="NM_031594.2"/>
</dbReference>
<dbReference type="PDB" id="2BP5">
    <property type="method" value="X-ray"/>
    <property type="resolution" value="2.80 A"/>
    <property type="chains" value="P=375-384"/>
</dbReference>
<dbReference type="PDB" id="2RUP">
    <property type="method" value="NMR"/>
    <property type="chains" value="A=111-167"/>
</dbReference>
<dbReference type="PDBsum" id="2BP5"/>
<dbReference type="PDBsum" id="2RUP"/>
<dbReference type="BMRB" id="P51577"/>
<dbReference type="SMR" id="P51577"/>
<dbReference type="BioGRID" id="248281">
    <property type="interactions" value="2"/>
</dbReference>
<dbReference type="DIP" id="DIP-48411N"/>
<dbReference type="FunCoup" id="P51577">
    <property type="interactions" value="26"/>
</dbReference>
<dbReference type="IntAct" id="P51577">
    <property type="interactions" value="2"/>
</dbReference>
<dbReference type="MINT" id="P51577"/>
<dbReference type="STRING" id="10116.ENSRNOP00000001752"/>
<dbReference type="BindingDB" id="P51577"/>
<dbReference type="ChEMBL" id="CHEMBL2818"/>
<dbReference type="DrugCentral" id="P51577"/>
<dbReference type="GuidetoPHARMACOLOGY" id="481"/>
<dbReference type="GlyCosmos" id="P51577">
    <property type="glycosylation" value="6 sites, No reported glycans"/>
</dbReference>
<dbReference type="GlyGen" id="P51577">
    <property type="glycosylation" value="7 sites"/>
</dbReference>
<dbReference type="PhosphoSitePlus" id="P51577"/>
<dbReference type="SwissPalm" id="P51577"/>
<dbReference type="PaxDb" id="10116-ENSRNOP00000001752"/>
<dbReference type="Ensembl" id="ENSRNOT00000001752.6">
    <property type="protein sequence ID" value="ENSRNOP00000001752.4"/>
    <property type="gene ID" value="ENSRNOG00000001300.8"/>
</dbReference>
<dbReference type="GeneID" id="29659"/>
<dbReference type="KEGG" id="rno:29659"/>
<dbReference type="UCSC" id="RGD:62073">
    <property type="organism name" value="rat"/>
</dbReference>
<dbReference type="AGR" id="RGD:62073"/>
<dbReference type="CTD" id="5025"/>
<dbReference type="RGD" id="62073">
    <property type="gene designation" value="P2rx4"/>
</dbReference>
<dbReference type="eggNOG" id="ENOG502QSUI">
    <property type="taxonomic scope" value="Eukaryota"/>
</dbReference>
<dbReference type="GeneTree" id="ENSGT01020000230351"/>
<dbReference type="HOGENOM" id="CLU_034469_2_0_1"/>
<dbReference type="InParanoid" id="P51577"/>
<dbReference type="OMA" id="NNCVPGY"/>
<dbReference type="OrthoDB" id="494673at2759"/>
<dbReference type="PhylomeDB" id="P51577"/>
<dbReference type="TreeFam" id="TF328633"/>
<dbReference type="Reactome" id="R-RNO-139853">
    <property type="pathway name" value="Elevation of cytosolic Ca2+ levels"/>
</dbReference>
<dbReference type="Reactome" id="R-RNO-418346">
    <property type="pathway name" value="Platelet homeostasis"/>
</dbReference>
<dbReference type="EvolutionaryTrace" id="P51577"/>
<dbReference type="PRO" id="PR:P51577"/>
<dbReference type="Proteomes" id="UP000002494">
    <property type="component" value="Chromosome 12"/>
</dbReference>
<dbReference type="Bgee" id="ENSRNOG00000001300">
    <property type="expression patterns" value="Expressed in pancreas and 20 other cell types or tissues"/>
</dbReference>
<dbReference type="GO" id="GO:0045177">
    <property type="term" value="C:apical part of cell"/>
    <property type="evidence" value="ECO:0000266"/>
    <property type="project" value="RGD"/>
</dbReference>
<dbReference type="GO" id="GO:0030424">
    <property type="term" value="C:axon"/>
    <property type="evidence" value="ECO:0000314"/>
    <property type="project" value="RGD"/>
</dbReference>
<dbReference type="GO" id="GO:0044297">
    <property type="term" value="C:cell body"/>
    <property type="evidence" value="ECO:0000314"/>
    <property type="project" value="ARUK-UCL"/>
</dbReference>
<dbReference type="GO" id="GO:0030054">
    <property type="term" value="C:cell junction"/>
    <property type="evidence" value="ECO:0000266"/>
    <property type="project" value="RGD"/>
</dbReference>
<dbReference type="GO" id="GO:0030425">
    <property type="term" value="C:dendrite"/>
    <property type="evidence" value="ECO:0000314"/>
    <property type="project" value="RGD"/>
</dbReference>
<dbReference type="GO" id="GO:0043197">
    <property type="term" value="C:dendritic spine"/>
    <property type="evidence" value="ECO:0000314"/>
    <property type="project" value="RGD"/>
</dbReference>
<dbReference type="GO" id="GO:0098978">
    <property type="term" value="C:glutamatergic synapse"/>
    <property type="evidence" value="ECO:0000314"/>
    <property type="project" value="SynGO"/>
</dbReference>
<dbReference type="GO" id="GO:0005765">
    <property type="term" value="C:lysosomal membrane"/>
    <property type="evidence" value="ECO:0000314"/>
    <property type="project" value="UniProtKB"/>
</dbReference>
<dbReference type="GO" id="GO:0016020">
    <property type="term" value="C:membrane"/>
    <property type="evidence" value="ECO:0000266"/>
    <property type="project" value="RGD"/>
</dbReference>
<dbReference type="GO" id="GO:0043025">
    <property type="term" value="C:neuronal cell body"/>
    <property type="evidence" value="ECO:0000314"/>
    <property type="project" value="RGD"/>
</dbReference>
<dbReference type="GO" id="GO:0098688">
    <property type="term" value="C:parallel fiber to Purkinje cell synapse"/>
    <property type="evidence" value="ECO:0000314"/>
    <property type="project" value="SynGO"/>
</dbReference>
<dbReference type="GO" id="GO:0048471">
    <property type="term" value="C:perinuclear region of cytoplasm"/>
    <property type="evidence" value="ECO:0000266"/>
    <property type="project" value="RGD"/>
</dbReference>
<dbReference type="GO" id="GO:0005886">
    <property type="term" value="C:plasma membrane"/>
    <property type="evidence" value="ECO:0000314"/>
    <property type="project" value="BHF-UCL"/>
</dbReference>
<dbReference type="GO" id="GO:0098839">
    <property type="term" value="C:postsynaptic density membrane"/>
    <property type="evidence" value="ECO:0000314"/>
    <property type="project" value="SynGO"/>
</dbReference>
<dbReference type="GO" id="GO:0043195">
    <property type="term" value="C:terminal bouton"/>
    <property type="evidence" value="ECO:0000314"/>
    <property type="project" value="RGD"/>
</dbReference>
<dbReference type="GO" id="GO:0005524">
    <property type="term" value="F:ATP binding"/>
    <property type="evidence" value="ECO:0000314"/>
    <property type="project" value="RGD"/>
</dbReference>
<dbReference type="GO" id="GO:0035381">
    <property type="term" value="F:ATP-gated ion channel activity"/>
    <property type="evidence" value="ECO:0000314"/>
    <property type="project" value="UniProtKB"/>
</dbReference>
<dbReference type="GO" id="GO:0045296">
    <property type="term" value="F:cadherin binding"/>
    <property type="evidence" value="ECO:0000266"/>
    <property type="project" value="RGD"/>
</dbReference>
<dbReference type="GO" id="GO:0005507">
    <property type="term" value="F:copper ion binding"/>
    <property type="evidence" value="ECO:0000314"/>
    <property type="project" value="BHF-UCL"/>
</dbReference>
<dbReference type="GO" id="GO:0004931">
    <property type="term" value="F:extracellularly ATP-gated monoatomic cation channel activity"/>
    <property type="evidence" value="ECO:0000314"/>
    <property type="project" value="UniProtKB"/>
</dbReference>
<dbReference type="GO" id="GO:0042802">
    <property type="term" value="F:identical protein binding"/>
    <property type="evidence" value="ECO:0000353"/>
    <property type="project" value="IntAct"/>
</dbReference>
<dbReference type="GO" id="GO:0099604">
    <property type="term" value="F:ligand-gated calcium channel activity"/>
    <property type="evidence" value="ECO:0000315"/>
    <property type="project" value="ARUK-UCL"/>
</dbReference>
<dbReference type="GO" id="GO:0099094">
    <property type="term" value="F:ligand-gated monoatomic cation channel activity"/>
    <property type="evidence" value="ECO:0000266"/>
    <property type="project" value="RGD"/>
</dbReference>
<dbReference type="GO" id="GO:0001614">
    <property type="term" value="F:purinergic nucleotide receptor activity"/>
    <property type="evidence" value="ECO:0000314"/>
    <property type="project" value="BHF-UCL"/>
</dbReference>
<dbReference type="GO" id="GO:0005102">
    <property type="term" value="F:signaling receptor binding"/>
    <property type="evidence" value="ECO:0000353"/>
    <property type="project" value="BHF-UCL"/>
</dbReference>
<dbReference type="GO" id="GO:0008270">
    <property type="term" value="F:zinc ion binding"/>
    <property type="evidence" value="ECO:0000314"/>
    <property type="project" value="BHF-UCL"/>
</dbReference>
<dbReference type="GO" id="GO:0097190">
    <property type="term" value="P:apoptotic signaling pathway"/>
    <property type="evidence" value="ECO:0000266"/>
    <property type="project" value="RGD"/>
</dbReference>
<dbReference type="GO" id="GO:0048266">
    <property type="term" value="P:behavioral response to pain"/>
    <property type="evidence" value="ECO:0000315"/>
    <property type="project" value="ARUK-UCL"/>
</dbReference>
<dbReference type="GO" id="GO:0070588">
    <property type="term" value="P:calcium ion transmembrane transport"/>
    <property type="evidence" value="ECO:0000314"/>
    <property type="project" value="UniProtKB"/>
</dbReference>
<dbReference type="GO" id="GO:0006816">
    <property type="term" value="P:calcium ion transport"/>
    <property type="evidence" value="ECO:0000266"/>
    <property type="project" value="RGD"/>
</dbReference>
<dbReference type="GO" id="GO:0071318">
    <property type="term" value="P:cellular response to ATP"/>
    <property type="evidence" value="ECO:0000314"/>
    <property type="project" value="UniProtKB"/>
</dbReference>
<dbReference type="GO" id="GO:0071294">
    <property type="term" value="P:cellular response to zinc ion"/>
    <property type="evidence" value="ECO:0000314"/>
    <property type="project" value="UniProtKB"/>
</dbReference>
<dbReference type="GO" id="GO:0060079">
    <property type="term" value="P:excitatory postsynaptic potential"/>
    <property type="evidence" value="ECO:0000266"/>
    <property type="project" value="RGD"/>
</dbReference>
<dbReference type="GO" id="GO:0098662">
    <property type="term" value="P:inorganic cation transmembrane transport"/>
    <property type="evidence" value="ECO:0000314"/>
    <property type="project" value="RGD"/>
</dbReference>
<dbReference type="GO" id="GO:0051899">
    <property type="term" value="P:membrane depolarization"/>
    <property type="evidence" value="ECO:0000266"/>
    <property type="project" value="RGD"/>
</dbReference>
<dbReference type="GO" id="GO:0034220">
    <property type="term" value="P:monoatomic ion transmembrane transport"/>
    <property type="evidence" value="ECO:0000266"/>
    <property type="project" value="RGD"/>
</dbReference>
<dbReference type="GO" id="GO:0010614">
    <property type="term" value="P:negative regulation of cardiac muscle hypertrophy"/>
    <property type="evidence" value="ECO:0000266"/>
    <property type="project" value="RGD"/>
</dbReference>
<dbReference type="GO" id="GO:0019228">
    <property type="term" value="P:neuronal action potential"/>
    <property type="evidence" value="ECO:0000314"/>
    <property type="project" value="RGD"/>
</dbReference>
<dbReference type="GO" id="GO:0006809">
    <property type="term" value="P:nitric oxide biosynthetic process"/>
    <property type="evidence" value="ECO:0000266"/>
    <property type="project" value="RGD"/>
</dbReference>
<dbReference type="GO" id="GO:0043536">
    <property type="term" value="P:positive regulation of blood vessel endothelial cell migration"/>
    <property type="evidence" value="ECO:0000266"/>
    <property type="project" value="RGD"/>
</dbReference>
<dbReference type="GO" id="GO:0010524">
    <property type="term" value="P:positive regulation of calcium ion transport into cytosol"/>
    <property type="evidence" value="ECO:0000266"/>
    <property type="project" value="RGD"/>
</dbReference>
<dbReference type="GO" id="GO:0050850">
    <property type="term" value="P:positive regulation of calcium-mediated signaling"/>
    <property type="evidence" value="ECO:0000266"/>
    <property type="project" value="RGD"/>
</dbReference>
<dbReference type="GO" id="GO:2001028">
    <property type="term" value="P:positive regulation of endothelial cell chemotaxis"/>
    <property type="evidence" value="ECO:0000266"/>
    <property type="project" value="RGD"/>
</dbReference>
<dbReference type="GO" id="GO:1904141">
    <property type="term" value="P:positive regulation of microglial cell migration"/>
    <property type="evidence" value="ECO:0000315"/>
    <property type="project" value="ARUK-UCL"/>
</dbReference>
<dbReference type="GO" id="GO:0051897">
    <property type="term" value="P:positive regulation of phosphatidylinositol 3-kinase/protein kinase B signal transduction"/>
    <property type="evidence" value="ECO:0000315"/>
    <property type="project" value="ARUK-UCL"/>
</dbReference>
<dbReference type="GO" id="GO:0035590">
    <property type="term" value="P:purinergic nucleotide receptor signaling pathway"/>
    <property type="evidence" value="ECO:0000266"/>
    <property type="project" value="RGD"/>
</dbReference>
<dbReference type="GO" id="GO:0008217">
    <property type="term" value="P:regulation of blood pressure"/>
    <property type="evidence" value="ECO:0000266"/>
    <property type="project" value="RGD"/>
</dbReference>
<dbReference type="GO" id="GO:0055117">
    <property type="term" value="P:regulation of cardiac muscle contraction"/>
    <property type="evidence" value="ECO:0000266"/>
    <property type="project" value="RGD"/>
</dbReference>
<dbReference type="GO" id="GO:0050920">
    <property type="term" value="P:regulation of chemotaxis"/>
    <property type="evidence" value="ECO:0000315"/>
    <property type="project" value="ARUK-UCL"/>
</dbReference>
<dbReference type="GO" id="GO:0002028">
    <property type="term" value="P:regulation of sodium ion transport"/>
    <property type="evidence" value="ECO:0000314"/>
    <property type="project" value="BHF-UCL"/>
</dbReference>
<dbReference type="GO" id="GO:0055119">
    <property type="term" value="P:relaxation of cardiac muscle"/>
    <property type="evidence" value="ECO:0000266"/>
    <property type="project" value="RGD"/>
</dbReference>
<dbReference type="GO" id="GO:0033198">
    <property type="term" value="P:response to ATP"/>
    <property type="evidence" value="ECO:0000266"/>
    <property type="project" value="RGD"/>
</dbReference>
<dbReference type="GO" id="GO:0048678">
    <property type="term" value="P:response to axon injury"/>
    <property type="evidence" value="ECO:0000315"/>
    <property type="project" value="ARUK-UCL"/>
</dbReference>
<dbReference type="GO" id="GO:0034405">
    <property type="term" value="P:response to fluid shear stress"/>
    <property type="evidence" value="ECO:0000266"/>
    <property type="project" value="RGD"/>
</dbReference>
<dbReference type="GO" id="GO:0002931">
    <property type="term" value="P:response to ischemia"/>
    <property type="evidence" value="ECO:0000315"/>
    <property type="project" value="ARUK-UCL"/>
</dbReference>
<dbReference type="GO" id="GO:0019233">
    <property type="term" value="P:sensory perception of pain"/>
    <property type="evidence" value="ECO:0000315"/>
    <property type="project" value="ARUK-UCL"/>
</dbReference>
<dbReference type="GO" id="GO:0050975">
    <property type="term" value="P:sensory perception of touch"/>
    <property type="evidence" value="ECO:0000315"/>
    <property type="project" value="ARUK-UCL"/>
</dbReference>
<dbReference type="GO" id="GO:0007165">
    <property type="term" value="P:signal transduction"/>
    <property type="evidence" value="ECO:0000266"/>
    <property type="project" value="RGD"/>
</dbReference>
<dbReference type="GO" id="GO:0042311">
    <property type="term" value="P:vasodilation"/>
    <property type="evidence" value="ECO:0000266"/>
    <property type="project" value="RGD"/>
</dbReference>
<dbReference type="FunFam" id="1.10.287.940:FF:000001">
    <property type="entry name" value="P2X purinoceptor"/>
    <property type="match status" value="1"/>
</dbReference>
<dbReference type="FunFam" id="2.60.490.10:FF:000001">
    <property type="entry name" value="P2X purinoceptor"/>
    <property type="match status" value="1"/>
</dbReference>
<dbReference type="FunFam" id="1.10.287.940:FF:000010">
    <property type="entry name" value="P2X receptor E"/>
    <property type="match status" value="1"/>
</dbReference>
<dbReference type="Gene3D" id="1.10.287.940">
    <property type="entry name" value="atp-gated p2x4 ion channel"/>
    <property type="match status" value="1"/>
</dbReference>
<dbReference type="Gene3D" id="2.60.490.10">
    <property type="entry name" value="atp-gated p2x4 ion channel domain"/>
    <property type="match status" value="1"/>
</dbReference>
<dbReference type="IDEAL" id="IID50123"/>
<dbReference type="InterPro" id="IPR003047">
    <property type="entry name" value="P2X4_purnocptor"/>
</dbReference>
<dbReference type="InterPro" id="IPR027309">
    <property type="entry name" value="P2X_extracellular_dom_sf"/>
</dbReference>
<dbReference type="InterPro" id="IPR001429">
    <property type="entry name" value="P2X_purnocptor"/>
</dbReference>
<dbReference type="InterPro" id="IPR053792">
    <property type="entry name" value="P2X_RECEPTOR_CS"/>
</dbReference>
<dbReference type="NCBIfam" id="TIGR00863">
    <property type="entry name" value="P2X"/>
    <property type="match status" value="1"/>
</dbReference>
<dbReference type="PANTHER" id="PTHR10125">
    <property type="entry name" value="P2X PURINOCEPTOR"/>
    <property type="match status" value="1"/>
</dbReference>
<dbReference type="PANTHER" id="PTHR10125:SF18">
    <property type="entry name" value="P2X PURINOCEPTOR 4"/>
    <property type="match status" value="1"/>
</dbReference>
<dbReference type="Pfam" id="PF00864">
    <property type="entry name" value="P2X_receptor"/>
    <property type="match status" value="1"/>
</dbReference>
<dbReference type="PIRSF" id="PIRSF005713">
    <property type="entry name" value="P2X_purinoceptor"/>
    <property type="match status" value="1"/>
</dbReference>
<dbReference type="PRINTS" id="PR01311">
    <property type="entry name" value="P2X4RECEPTOR"/>
</dbReference>
<dbReference type="PRINTS" id="PR01307">
    <property type="entry name" value="P2XRECEPTOR"/>
</dbReference>
<dbReference type="PROSITE" id="PS01212">
    <property type="entry name" value="P2X_RECEPTOR"/>
    <property type="match status" value="1"/>
</dbReference>